<organism>
    <name type="scientific">Gloeobacter violaceus (strain ATCC 29082 / PCC 7421)</name>
    <dbReference type="NCBI Taxonomy" id="251221"/>
    <lineage>
        <taxon>Bacteria</taxon>
        <taxon>Bacillati</taxon>
        <taxon>Cyanobacteriota</taxon>
        <taxon>Cyanophyceae</taxon>
        <taxon>Gloeobacterales</taxon>
        <taxon>Gloeobacteraceae</taxon>
        <taxon>Gloeobacter</taxon>
    </lineage>
</organism>
<evidence type="ECO:0000255" key="1">
    <source>
        <dbReference type="HAMAP-Rule" id="MF_01334"/>
    </source>
</evidence>
<evidence type="ECO:0000256" key="2">
    <source>
        <dbReference type="SAM" id="MobiDB-lite"/>
    </source>
</evidence>
<evidence type="ECO:0000305" key="3"/>
<reference key="1">
    <citation type="journal article" date="2003" name="DNA Res.">
        <title>Complete genome structure of Gloeobacter violaceus PCC 7421, a cyanobacterium that lacks thylakoids.</title>
        <authorList>
            <person name="Nakamura Y."/>
            <person name="Kaneko T."/>
            <person name="Sato S."/>
            <person name="Mimuro M."/>
            <person name="Miyashita H."/>
            <person name="Tsuchiya T."/>
            <person name="Sasamoto S."/>
            <person name="Watanabe A."/>
            <person name="Kawashima K."/>
            <person name="Kishida Y."/>
            <person name="Kiyokawa C."/>
            <person name="Kohara M."/>
            <person name="Matsumoto M."/>
            <person name="Matsuno A."/>
            <person name="Nakazaki N."/>
            <person name="Shimpo S."/>
            <person name="Takeuchi C."/>
            <person name="Yamada M."/>
            <person name="Tabata S."/>
        </authorList>
    </citation>
    <scope>NUCLEOTIDE SEQUENCE [LARGE SCALE GENOMIC DNA]</scope>
    <source>
        <strain>ATCC 29082 / PCC 7421</strain>
    </source>
</reference>
<name>RL25_GLOVI</name>
<accession>Q7NNL2</accession>
<keyword id="KW-1185">Reference proteome</keyword>
<keyword id="KW-0687">Ribonucleoprotein</keyword>
<keyword id="KW-0689">Ribosomal protein</keyword>
<keyword id="KW-0694">RNA-binding</keyword>
<keyword id="KW-0699">rRNA-binding</keyword>
<gene>
    <name evidence="1" type="primary">rplY</name>
    <name evidence="1" type="synonym">ctc</name>
    <name type="synonym">rpl25</name>
    <name type="ordered locus">gll0399</name>
</gene>
<proteinExistence type="inferred from homology"/>
<sequence length="211" mass="22534">MTIPLTLKQRATGAQPRAMRREGRIPAVLYGHRGTQSLALELEQRTAEDLLKRVTINNTILPLKVERGWSGDVLLREVQHDAVGGKLLHLSFFAVAGHGSITLDLPLVFTGEAVGVKMDGGLLEKVLTQLTVNTPPTDVPEAIEVDISTMQVGDMLYVKDLVLPPGIEVVNTPDLVVAHLTPSPTGRALQSMDAAESAVEQPGEQPATAAG</sequence>
<feature type="chain" id="PRO_0000181551" description="Large ribosomal subunit protein bL25">
    <location>
        <begin position="1"/>
        <end position="211"/>
    </location>
</feature>
<feature type="region of interest" description="Disordered" evidence="2">
    <location>
        <begin position="186"/>
        <end position="211"/>
    </location>
</feature>
<comment type="function">
    <text evidence="1">This is one of the proteins that binds to the 5S RNA in the ribosome where it forms part of the central protuberance.</text>
</comment>
<comment type="subunit">
    <text evidence="1">Part of the 50S ribosomal subunit; part of the 5S rRNA/L5/L18/L25 subcomplex. Contacts the 5S rRNA. Binds to the 5S rRNA independently of L5 and L18.</text>
</comment>
<comment type="similarity">
    <text evidence="1">Belongs to the bacterial ribosomal protein bL25 family. CTC subfamily.</text>
</comment>
<dbReference type="EMBL" id="BA000045">
    <property type="protein sequence ID" value="BAC88340.1"/>
    <property type="molecule type" value="Genomic_DNA"/>
</dbReference>
<dbReference type="RefSeq" id="NP_923345.1">
    <property type="nucleotide sequence ID" value="NC_005125.1"/>
</dbReference>
<dbReference type="RefSeq" id="WP_011140402.1">
    <property type="nucleotide sequence ID" value="NC_005125.1"/>
</dbReference>
<dbReference type="SMR" id="Q7NNL2"/>
<dbReference type="FunCoup" id="Q7NNL2">
    <property type="interactions" value="52"/>
</dbReference>
<dbReference type="STRING" id="251221.gene:10757871"/>
<dbReference type="EnsemblBacteria" id="BAC88340">
    <property type="protein sequence ID" value="BAC88340"/>
    <property type="gene ID" value="BAC88340"/>
</dbReference>
<dbReference type="KEGG" id="gvi:gll0399"/>
<dbReference type="PATRIC" id="fig|251221.4.peg.405"/>
<dbReference type="eggNOG" id="COG1825">
    <property type="taxonomic scope" value="Bacteria"/>
</dbReference>
<dbReference type="HOGENOM" id="CLU_075939_2_0_3"/>
<dbReference type="InParanoid" id="Q7NNL2"/>
<dbReference type="OrthoDB" id="9786489at2"/>
<dbReference type="PhylomeDB" id="Q7NNL2"/>
<dbReference type="Proteomes" id="UP000000557">
    <property type="component" value="Chromosome"/>
</dbReference>
<dbReference type="GO" id="GO:0022625">
    <property type="term" value="C:cytosolic large ribosomal subunit"/>
    <property type="evidence" value="ECO:0000318"/>
    <property type="project" value="GO_Central"/>
</dbReference>
<dbReference type="GO" id="GO:0008097">
    <property type="term" value="F:5S rRNA binding"/>
    <property type="evidence" value="ECO:0000318"/>
    <property type="project" value="GO_Central"/>
</dbReference>
<dbReference type="GO" id="GO:0003735">
    <property type="term" value="F:structural constituent of ribosome"/>
    <property type="evidence" value="ECO:0007669"/>
    <property type="project" value="InterPro"/>
</dbReference>
<dbReference type="GO" id="GO:0006412">
    <property type="term" value="P:translation"/>
    <property type="evidence" value="ECO:0000318"/>
    <property type="project" value="GO_Central"/>
</dbReference>
<dbReference type="CDD" id="cd00495">
    <property type="entry name" value="Ribosomal_L25_TL5_CTC"/>
    <property type="match status" value="1"/>
</dbReference>
<dbReference type="Gene3D" id="2.170.120.20">
    <property type="entry name" value="Ribosomal protein L25, beta domain"/>
    <property type="match status" value="1"/>
</dbReference>
<dbReference type="Gene3D" id="2.40.240.10">
    <property type="entry name" value="Ribosomal Protein L25, Chain P"/>
    <property type="match status" value="1"/>
</dbReference>
<dbReference type="HAMAP" id="MF_01334">
    <property type="entry name" value="Ribosomal_bL25_CTC"/>
    <property type="match status" value="1"/>
</dbReference>
<dbReference type="InterPro" id="IPR020056">
    <property type="entry name" value="Rbsml_bL25/Gln-tRNA_synth_N"/>
</dbReference>
<dbReference type="InterPro" id="IPR011035">
    <property type="entry name" value="Ribosomal_bL25/Gln-tRNA_synth"/>
</dbReference>
<dbReference type="InterPro" id="IPR020057">
    <property type="entry name" value="Ribosomal_bL25_b-dom"/>
</dbReference>
<dbReference type="InterPro" id="IPR037121">
    <property type="entry name" value="Ribosomal_bL25_C"/>
</dbReference>
<dbReference type="InterPro" id="IPR001021">
    <property type="entry name" value="Ribosomal_bL25_long"/>
</dbReference>
<dbReference type="InterPro" id="IPR029751">
    <property type="entry name" value="Ribosomal_L25_dom"/>
</dbReference>
<dbReference type="InterPro" id="IPR020930">
    <property type="entry name" value="Ribosomal_uL5_bac-type"/>
</dbReference>
<dbReference type="NCBIfam" id="TIGR00731">
    <property type="entry name" value="bL25_bact_ctc"/>
    <property type="match status" value="1"/>
</dbReference>
<dbReference type="NCBIfam" id="NF004139">
    <property type="entry name" value="PRK05618.4-2"/>
    <property type="match status" value="1"/>
</dbReference>
<dbReference type="PANTHER" id="PTHR33284">
    <property type="entry name" value="RIBOSOMAL PROTEIN L25/GLN-TRNA SYNTHETASE, ANTI-CODON-BINDING DOMAIN-CONTAINING PROTEIN"/>
    <property type="match status" value="1"/>
</dbReference>
<dbReference type="PANTHER" id="PTHR33284:SF1">
    <property type="entry name" value="RIBOSOMAL PROTEIN L25_GLN-TRNA SYNTHETASE, ANTI-CODON-BINDING DOMAIN-CONTAINING PROTEIN"/>
    <property type="match status" value="1"/>
</dbReference>
<dbReference type="Pfam" id="PF01386">
    <property type="entry name" value="Ribosomal_L25p"/>
    <property type="match status" value="1"/>
</dbReference>
<dbReference type="Pfam" id="PF14693">
    <property type="entry name" value="Ribosomal_TL5_C"/>
    <property type="match status" value="1"/>
</dbReference>
<dbReference type="SUPFAM" id="SSF50715">
    <property type="entry name" value="Ribosomal protein L25-like"/>
    <property type="match status" value="1"/>
</dbReference>
<protein>
    <recommendedName>
        <fullName evidence="1">Large ribosomal subunit protein bL25</fullName>
    </recommendedName>
    <alternativeName>
        <fullName evidence="3">50S ribosomal protein L25</fullName>
    </alternativeName>
    <alternativeName>
        <fullName evidence="1">General stress protein CTC</fullName>
    </alternativeName>
</protein>